<evidence type="ECO:0000255" key="1">
    <source>
        <dbReference type="HAMAP-Rule" id="MF_00388"/>
    </source>
</evidence>
<comment type="function">
    <text evidence="1">Catalyzes the hydrolysis of UDP-3-O-myristoyl-N-acetylglucosamine to form UDP-3-O-myristoylglucosamine and acetate, the committed step in lipid A biosynthesis.</text>
</comment>
<comment type="catalytic activity">
    <reaction evidence="1">
        <text>a UDP-3-O-[(3R)-3-hydroxyacyl]-N-acetyl-alpha-D-glucosamine + H2O = a UDP-3-O-[(3R)-3-hydroxyacyl]-alpha-D-glucosamine + acetate</text>
        <dbReference type="Rhea" id="RHEA:67816"/>
        <dbReference type="ChEBI" id="CHEBI:15377"/>
        <dbReference type="ChEBI" id="CHEBI:30089"/>
        <dbReference type="ChEBI" id="CHEBI:137740"/>
        <dbReference type="ChEBI" id="CHEBI:173225"/>
        <dbReference type="EC" id="3.5.1.108"/>
    </reaction>
</comment>
<comment type="cofactor">
    <cofactor evidence="1">
        <name>Zn(2+)</name>
        <dbReference type="ChEBI" id="CHEBI:29105"/>
    </cofactor>
</comment>
<comment type="pathway">
    <text evidence="1">Glycolipid biosynthesis; lipid IV(A) biosynthesis; lipid IV(A) from (3R)-3-hydroxytetradecanoyl-[acyl-carrier-protein] and UDP-N-acetyl-alpha-D-glucosamine: step 2/6.</text>
</comment>
<comment type="similarity">
    <text evidence="1">Belongs to the LpxC family.</text>
</comment>
<dbReference type="EC" id="3.5.1.108" evidence="1"/>
<dbReference type="EMBL" id="CR954246">
    <property type="protein sequence ID" value="CAI87546.1"/>
    <property type="molecule type" value="Genomic_DNA"/>
</dbReference>
<dbReference type="SMR" id="Q3IFY6"/>
<dbReference type="STRING" id="326442.PSHAa2498"/>
<dbReference type="KEGG" id="pha:PSHAa2498"/>
<dbReference type="eggNOG" id="COG0774">
    <property type="taxonomic scope" value="Bacteria"/>
</dbReference>
<dbReference type="HOGENOM" id="CLU_046528_1_0_6"/>
<dbReference type="BioCyc" id="PHAL326442:PSHA_RS12300-MONOMER"/>
<dbReference type="UniPathway" id="UPA00359">
    <property type="reaction ID" value="UER00478"/>
</dbReference>
<dbReference type="Proteomes" id="UP000006843">
    <property type="component" value="Chromosome I"/>
</dbReference>
<dbReference type="GO" id="GO:0016020">
    <property type="term" value="C:membrane"/>
    <property type="evidence" value="ECO:0007669"/>
    <property type="project" value="GOC"/>
</dbReference>
<dbReference type="GO" id="GO:0046872">
    <property type="term" value="F:metal ion binding"/>
    <property type="evidence" value="ECO:0007669"/>
    <property type="project" value="UniProtKB-KW"/>
</dbReference>
<dbReference type="GO" id="GO:0103117">
    <property type="term" value="F:UDP-3-O-acyl-N-acetylglucosamine deacetylase activity"/>
    <property type="evidence" value="ECO:0007669"/>
    <property type="project" value="UniProtKB-UniRule"/>
</dbReference>
<dbReference type="GO" id="GO:0009245">
    <property type="term" value="P:lipid A biosynthetic process"/>
    <property type="evidence" value="ECO:0007669"/>
    <property type="project" value="UniProtKB-UniRule"/>
</dbReference>
<dbReference type="Gene3D" id="3.30.230.20">
    <property type="entry name" value="lpxc deacetylase, domain 1"/>
    <property type="match status" value="1"/>
</dbReference>
<dbReference type="Gene3D" id="3.30.1700.10">
    <property type="entry name" value="lpxc deacetylase, domain 2"/>
    <property type="match status" value="1"/>
</dbReference>
<dbReference type="HAMAP" id="MF_00388">
    <property type="entry name" value="LpxC"/>
    <property type="match status" value="1"/>
</dbReference>
<dbReference type="InterPro" id="IPR020568">
    <property type="entry name" value="Ribosomal_Su5_D2-typ_SF"/>
</dbReference>
<dbReference type="InterPro" id="IPR004463">
    <property type="entry name" value="UDP-acyl_GlcNac_deAcase"/>
</dbReference>
<dbReference type="InterPro" id="IPR011334">
    <property type="entry name" value="UDP-acyl_GlcNac_deAcase_C"/>
</dbReference>
<dbReference type="InterPro" id="IPR015870">
    <property type="entry name" value="UDP-acyl_N-AcGlcN_deAcase_N"/>
</dbReference>
<dbReference type="NCBIfam" id="TIGR00325">
    <property type="entry name" value="lpxC"/>
    <property type="match status" value="1"/>
</dbReference>
<dbReference type="PANTHER" id="PTHR33694">
    <property type="entry name" value="UDP-3-O-ACYL-N-ACETYLGLUCOSAMINE DEACETYLASE 1, MITOCHONDRIAL-RELATED"/>
    <property type="match status" value="1"/>
</dbReference>
<dbReference type="PANTHER" id="PTHR33694:SF1">
    <property type="entry name" value="UDP-3-O-ACYL-N-ACETYLGLUCOSAMINE DEACETYLASE 1, MITOCHONDRIAL-RELATED"/>
    <property type="match status" value="1"/>
</dbReference>
<dbReference type="Pfam" id="PF03331">
    <property type="entry name" value="LpxC"/>
    <property type="match status" value="1"/>
</dbReference>
<dbReference type="SUPFAM" id="SSF54211">
    <property type="entry name" value="Ribosomal protein S5 domain 2-like"/>
    <property type="match status" value="2"/>
</dbReference>
<sequence>MIKQRTIAQVVKAIGIGLHKGEKVTITLRPASANTGIVFRRVDLDPVVDFETTPEAVGDTQLCTCLINKDGVRLSTTEHLIAAVAAMGIDNLIVELDSSEVPIMDGSALPFIYLLQKGGIEEQNAAKRFIRIKEKVRIEEGDKWAELEPYDGFHIDFEIAFDHPAINESRQRIGLDITTKSFIEEISRARTFGFMKDIEYMHANNLALGGSMDSAVVLDEFKVLNPNGLRYSDEFVKHKILDCVGDMFMTGHNILGKVTAFKSGHDLNNKLLRKLMATESAWEWATFETPVTMPAPGLELAPA</sequence>
<organism>
    <name type="scientific">Pseudoalteromonas translucida (strain TAC 125)</name>
    <dbReference type="NCBI Taxonomy" id="326442"/>
    <lineage>
        <taxon>Bacteria</taxon>
        <taxon>Pseudomonadati</taxon>
        <taxon>Pseudomonadota</taxon>
        <taxon>Gammaproteobacteria</taxon>
        <taxon>Alteromonadales</taxon>
        <taxon>Pseudoalteromonadaceae</taxon>
        <taxon>Pseudoalteromonas</taxon>
    </lineage>
</organism>
<gene>
    <name evidence="1" type="primary">lpxC</name>
    <name type="ordered locus">PSHAa2498</name>
</gene>
<protein>
    <recommendedName>
        <fullName evidence="1">UDP-3-O-acyl-N-acetylglucosamine deacetylase</fullName>
        <shortName evidence="1">UDP-3-O-acyl-GlcNAc deacetylase</shortName>
        <ecNumber evidence="1">3.5.1.108</ecNumber>
    </recommendedName>
    <alternativeName>
        <fullName evidence="1">UDP-3-O-[R-3-hydroxymyristoyl]-N-acetylglucosamine deacetylase</fullName>
    </alternativeName>
</protein>
<reference key="1">
    <citation type="journal article" date="2005" name="Genome Res.">
        <title>Coping with cold: the genome of the versatile marine Antarctica bacterium Pseudoalteromonas haloplanktis TAC125.</title>
        <authorList>
            <person name="Medigue C."/>
            <person name="Krin E."/>
            <person name="Pascal G."/>
            <person name="Barbe V."/>
            <person name="Bernsel A."/>
            <person name="Bertin P.N."/>
            <person name="Cheung F."/>
            <person name="Cruveiller S."/>
            <person name="D'Amico S."/>
            <person name="Duilio A."/>
            <person name="Fang G."/>
            <person name="Feller G."/>
            <person name="Ho C."/>
            <person name="Mangenot S."/>
            <person name="Marino G."/>
            <person name="Nilsson J."/>
            <person name="Parrilli E."/>
            <person name="Rocha E.P.C."/>
            <person name="Rouy Z."/>
            <person name="Sekowska A."/>
            <person name="Tutino M.L."/>
            <person name="Vallenet D."/>
            <person name="von Heijne G."/>
            <person name="Danchin A."/>
        </authorList>
    </citation>
    <scope>NUCLEOTIDE SEQUENCE [LARGE SCALE GENOMIC DNA]</scope>
    <source>
        <strain>TAC 125</strain>
    </source>
</reference>
<feature type="chain" id="PRO_0000253682" description="UDP-3-O-acyl-N-acetylglucosamine deacetylase">
    <location>
        <begin position="1"/>
        <end position="303"/>
    </location>
</feature>
<feature type="active site" description="Proton donor" evidence="1">
    <location>
        <position position="265"/>
    </location>
</feature>
<feature type="binding site" evidence="1">
    <location>
        <position position="79"/>
    </location>
    <ligand>
        <name>Zn(2+)</name>
        <dbReference type="ChEBI" id="CHEBI:29105"/>
    </ligand>
</feature>
<feature type="binding site" evidence="1">
    <location>
        <position position="238"/>
    </location>
    <ligand>
        <name>Zn(2+)</name>
        <dbReference type="ChEBI" id="CHEBI:29105"/>
    </ligand>
</feature>
<feature type="binding site" evidence="1">
    <location>
        <position position="242"/>
    </location>
    <ligand>
        <name>Zn(2+)</name>
        <dbReference type="ChEBI" id="CHEBI:29105"/>
    </ligand>
</feature>
<proteinExistence type="inferred from homology"/>
<accession>Q3IFY6</accession>
<name>LPXC_PSET1</name>
<keyword id="KW-0378">Hydrolase</keyword>
<keyword id="KW-0441">Lipid A biosynthesis</keyword>
<keyword id="KW-0444">Lipid biosynthesis</keyword>
<keyword id="KW-0443">Lipid metabolism</keyword>
<keyword id="KW-0479">Metal-binding</keyword>
<keyword id="KW-1185">Reference proteome</keyword>
<keyword id="KW-0862">Zinc</keyword>